<evidence type="ECO:0000255" key="1">
    <source>
        <dbReference type="HAMAP-Rule" id="MF_00469"/>
    </source>
</evidence>
<evidence type="ECO:0000256" key="2">
    <source>
        <dbReference type="SAM" id="MobiDB-lite"/>
    </source>
</evidence>
<keyword id="KW-0560">Oxidoreductase</keyword>
<keyword id="KW-0819">tRNA processing</keyword>
<sequence>MPVLHNRISNDELKAKMLAESEPRTTISFYKYFTIASPQQTRDALYQVFTALDVFGRVYLAHEGINAQISVPQSKVETFRQQLYTFDPALDGLRLNIALEDDGKSFWVLRMKVRDRIVADGIDDPTFDASNVGDYLKAADVNAMLDDPDAVFIDMRNHYEYEVGHFENALEIPADTFREQLPKAVEMLREHADKKIVMYCTGGIRCEKASAWMKHNGFNKVWHIEGGIIEYARRAREQGLPVRFIGKNFVFDERMGERISDEVIAHCHQCGAPCDSHTNCKNDGCHLLFIQCPQCASKFNGCCSEQCCEELALPEEEQRRRRAGRENGNKIFNKSRGRLNSKLSIPDPAE</sequence>
<name>TRHO_SALDC</name>
<proteinExistence type="inferred from homology"/>
<organism>
    <name type="scientific">Salmonella dublin (strain CT_02021853)</name>
    <dbReference type="NCBI Taxonomy" id="439851"/>
    <lineage>
        <taxon>Bacteria</taxon>
        <taxon>Pseudomonadati</taxon>
        <taxon>Pseudomonadota</taxon>
        <taxon>Gammaproteobacteria</taxon>
        <taxon>Enterobacterales</taxon>
        <taxon>Enterobacteriaceae</taxon>
        <taxon>Salmonella</taxon>
    </lineage>
</organism>
<reference key="1">
    <citation type="journal article" date="2011" name="J. Bacteriol.">
        <title>Comparative genomics of 28 Salmonella enterica isolates: evidence for CRISPR-mediated adaptive sublineage evolution.</title>
        <authorList>
            <person name="Fricke W.F."/>
            <person name="Mammel M.K."/>
            <person name="McDermott P.F."/>
            <person name="Tartera C."/>
            <person name="White D.G."/>
            <person name="Leclerc J.E."/>
            <person name="Ravel J."/>
            <person name="Cebula T.A."/>
        </authorList>
    </citation>
    <scope>NUCLEOTIDE SEQUENCE [LARGE SCALE GENOMIC DNA]</scope>
    <source>
        <strain>CT_02021853</strain>
    </source>
</reference>
<protein>
    <recommendedName>
        <fullName evidence="1">tRNA uridine(34) hydroxylase</fullName>
        <ecNumber evidence="1">1.14.-.-</ecNumber>
    </recommendedName>
    <alternativeName>
        <fullName evidence="1">tRNA hydroxylation protein O</fullName>
    </alternativeName>
</protein>
<comment type="function">
    <text evidence="1">Catalyzes oxygen-dependent 5-hydroxyuridine (ho5U) modification at position 34 in tRNAs.</text>
</comment>
<comment type="catalytic activity">
    <reaction evidence="1">
        <text>uridine(34) in tRNA + AH2 + O2 = 5-hydroxyuridine(34) in tRNA + A + H2O</text>
        <dbReference type="Rhea" id="RHEA:64224"/>
        <dbReference type="Rhea" id="RHEA-COMP:11727"/>
        <dbReference type="Rhea" id="RHEA-COMP:13381"/>
        <dbReference type="ChEBI" id="CHEBI:13193"/>
        <dbReference type="ChEBI" id="CHEBI:15377"/>
        <dbReference type="ChEBI" id="CHEBI:15379"/>
        <dbReference type="ChEBI" id="CHEBI:17499"/>
        <dbReference type="ChEBI" id="CHEBI:65315"/>
        <dbReference type="ChEBI" id="CHEBI:136877"/>
    </reaction>
</comment>
<comment type="similarity">
    <text evidence="1">Belongs to the TrhO family.</text>
</comment>
<accession>B5FL09</accession>
<dbReference type="EC" id="1.14.-.-" evidence="1"/>
<dbReference type="EMBL" id="CP001144">
    <property type="protein sequence ID" value="ACH75224.1"/>
    <property type="molecule type" value="Genomic_DNA"/>
</dbReference>
<dbReference type="RefSeq" id="WP_001144637.1">
    <property type="nucleotide sequence ID" value="NC_011205.1"/>
</dbReference>
<dbReference type="SMR" id="B5FL09"/>
<dbReference type="KEGG" id="sed:SeD_A2217"/>
<dbReference type="HOGENOM" id="CLU_038878_1_1_6"/>
<dbReference type="Proteomes" id="UP000008322">
    <property type="component" value="Chromosome"/>
</dbReference>
<dbReference type="GO" id="GO:0016705">
    <property type="term" value="F:oxidoreductase activity, acting on paired donors, with incorporation or reduction of molecular oxygen"/>
    <property type="evidence" value="ECO:0007669"/>
    <property type="project" value="UniProtKB-UniRule"/>
</dbReference>
<dbReference type="GO" id="GO:0006400">
    <property type="term" value="P:tRNA modification"/>
    <property type="evidence" value="ECO:0007669"/>
    <property type="project" value="UniProtKB-UniRule"/>
</dbReference>
<dbReference type="CDD" id="cd01518">
    <property type="entry name" value="RHOD_YceA"/>
    <property type="match status" value="1"/>
</dbReference>
<dbReference type="Gene3D" id="3.30.70.100">
    <property type="match status" value="1"/>
</dbReference>
<dbReference type="Gene3D" id="3.40.250.10">
    <property type="entry name" value="Rhodanese-like domain"/>
    <property type="match status" value="1"/>
</dbReference>
<dbReference type="HAMAP" id="MF_00469">
    <property type="entry name" value="TrhO"/>
    <property type="match status" value="1"/>
</dbReference>
<dbReference type="InterPro" id="IPR001763">
    <property type="entry name" value="Rhodanese-like_dom"/>
</dbReference>
<dbReference type="InterPro" id="IPR036873">
    <property type="entry name" value="Rhodanese-like_dom_sf"/>
</dbReference>
<dbReference type="InterPro" id="IPR022111">
    <property type="entry name" value="Rhodanese_C"/>
</dbReference>
<dbReference type="InterPro" id="IPR020936">
    <property type="entry name" value="TrhO"/>
</dbReference>
<dbReference type="InterPro" id="IPR040503">
    <property type="entry name" value="TRHO_N"/>
</dbReference>
<dbReference type="NCBIfam" id="NF001133">
    <property type="entry name" value="PRK00142.1-1"/>
    <property type="match status" value="1"/>
</dbReference>
<dbReference type="PANTHER" id="PTHR43846:SF1">
    <property type="entry name" value="TRNA URIDINE(34) HYDROXYLASE"/>
    <property type="match status" value="1"/>
</dbReference>
<dbReference type="PANTHER" id="PTHR43846">
    <property type="entry name" value="UPF0176 PROTEIN YCEA"/>
    <property type="match status" value="1"/>
</dbReference>
<dbReference type="Pfam" id="PF00581">
    <property type="entry name" value="Rhodanese"/>
    <property type="match status" value="1"/>
</dbReference>
<dbReference type="Pfam" id="PF12368">
    <property type="entry name" value="Rhodanese_C"/>
    <property type="match status" value="1"/>
</dbReference>
<dbReference type="Pfam" id="PF17773">
    <property type="entry name" value="UPF0176_N"/>
    <property type="match status" value="1"/>
</dbReference>
<dbReference type="SMART" id="SM00450">
    <property type="entry name" value="RHOD"/>
    <property type="match status" value="1"/>
</dbReference>
<dbReference type="SUPFAM" id="SSF52821">
    <property type="entry name" value="Rhodanese/Cell cycle control phosphatase"/>
    <property type="match status" value="1"/>
</dbReference>
<dbReference type="PROSITE" id="PS50206">
    <property type="entry name" value="RHODANESE_3"/>
    <property type="match status" value="1"/>
</dbReference>
<feature type="chain" id="PRO_1000200372" description="tRNA uridine(34) hydroxylase">
    <location>
        <begin position="1"/>
        <end position="350"/>
    </location>
</feature>
<feature type="domain" description="Rhodanese" evidence="1">
    <location>
        <begin position="146"/>
        <end position="240"/>
    </location>
</feature>
<feature type="region of interest" description="Disordered" evidence="2">
    <location>
        <begin position="319"/>
        <end position="350"/>
    </location>
</feature>
<feature type="compositionally biased region" description="Basic and acidic residues" evidence="2">
    <location>
        <begin position="319"/>
        <end position="328"/>
    </location>
</feature>
<feature type="active site" description="Cysteine persulfide intermediate" evidence="1">
    <location>
        <position position="200"/>
    </location>
</feature>
<gene>
    <name evidence="1" type="primary">trhO</name>
    <name type="synonym">yceA</name>
    <name type="ordered locus">SeD_A2217</name>
</gene>